<keyword id="KW-0143">Chaperone</keyword>
<keyword id="KW-0963">Cytoplasm</keyword>
<keyword id="KW-0346">Stress response</keyword>
<sequence length="191" mass="21658">MTDSSNAHEAENPTVPTPDNEIQDLQQEIATLKAELKEKNDKYLMVLAESENARKRMQKERQEMMQYAVENALIDFLVPIESMEKALGFASQMSDEVKNWALGFNMILQQFKQVFEEKGIVEYSSVGQKFNPFLHEAVETEETTKVPEGTIVEEFSKGYKIGDRPIRVAKVKVSKAPAPQGTEAEIENNNE</sequence>
<organism>
    <name type="scientific">Chlamydia abortus (strain DSM 27085 / S26/3)</name>
    <name type="common">Chlamydophila abortus</name>
    <dbReference type="NCBI Taxonomy" id="218497"/>
    <lineage>
        <taxon>Bacteria</taxon>
        <taxon>Pseudomonadati</taxon>
        <taxon>Chlamydiota</taxon>
        <taxon>Chlamydiia</taxon>
        <taxon>Chlamydiales</taxon>
        <taxon>Chlamydiaceae</taxon>
        <taxon>Chlamydia/Chlamydophila group</taxon>
        <taxon>Chlamydia</taxon>
    </lineage>
</organism>
<evidence type="ECO:0000255" key="1">
    <source>
        <dbReference type="HAMAP-Rule" id="MF_01151"/>
    </source>
</evidence>
<evidence type="ECO:0000256" key="2">
    <source>
        <dbReference type="SAM" id="MobiDB-lite"/>
    </source>
</evidence>
<evidence type="ECO:0000305" key="3"/>
<gene>
    <name evidence="1" type="primary">grpE</name>
    <name type="ordered locus">CAB238</name>
</gene>
<proteinExistence type="inferred from homology"/>
<reference key="1">
    <citation type="journal article" date="2002" name="Vet. Res.">
        <title>Protection evaluation against Chlamydophila abortus challenge by DNA vaccination with a dnaK-encoding plasmid in pregnant and non-pregnant mice.</title>
        <authorList>
            <person name="Hechard C."/>
            <person name="Grepinet O."/>
            <person name="Rodolakis A."/>
        </authorList>
    </citation>
    <scope>NUCLEOTIDE SEQUENCE [GENOMIC DNA]</scope>
    <source>
        <strain>AB7</strain>
    </source>
</reference>
<reference key="2">
    <citation type="journal article" date="2005" name="Genome Res.">
        <title>The Chlamydophila abortus genome sequence reveals an array of variable proteins that contribute to interspecies variation.</title>
        <authorList>
            <person name="Thomson N.R."/>
            <person name="Yeats C."/>
            <person name="Bell K."/>
            <person name="Holden M.T.G."/>
            <person name="Bentley S.D."/>
            <person name="Livingstone M."/>
            <person name="Cerdeno-Tarraga A.-M."/>
            <person name="Harris B."/>
            <person name="Doggett J."/>
            <person name="Ormond D."/>
            <person name="Mungall K."/>
            <person name="Clarke K."/>
            <person name="Feltwell T."/>
            <person name="Hance Z."/>
            <person name="Sanders M."/>
            <person name="Quail M.A."/>
            <person name="Price C."/>
            <person name="Barrell B.G."/>
            <person name="Parkhill J."/>
            <person name="Longbottom D."/>
        </authorList>
    </citation>
    <scope>NUCLEOTIDE SEQUENCE [LARGE SCALE GENOMIC DNA]</scope>
    <source>
        <strain>DSM 27085 / S26/3</strain>
    </source>
</reference>
<name>GRPE_CHLAB</name>
<feature type="chain" id="PRO_0000113766" description="Protein GrpE">
    <location>
        <begin position="1"/>
        <end position="191"/>
    </location>
</feature>
<feature type="region of interest" description="Disordered" evidence="2">
    <location>
        <begin position="1"/>
        <end position="22"/>
    </location>
</feature>
<feature type="region of interest" description="Disordered" evidence="2">
    <location>
        <begin position="172"/>
        <end position="191"/>
    </location>
</feature>
<feature type="compositionally biased region" description="Basic and acidic residues" evidence="2">
    <location>
        <begin position="1"/>
        <end position="11"/>
    </location>
</feature>
<feature type="sequence conflict" description="In Ref. 1." evidence="3" ref="1">
    <location>
        <begin position="159"/>
        <end position="181"/>
    </location>
</feature>
<accession>Q8GH80</accession>
<accession>Q5L6M7</accession>
<dbReference type="EMBL" id="AF384685">
    <property type="protein sequence ID" value="AAN77258.1"/>
    <property type="molecule type" value="Genomic_DNA"/>
</dbReference>
<dbReference type="EMBL" id="CR848038">
    <property type="protein sequence ID" value="CAH63694.1"/>
    <property type="molecule type" value="Genomic_DNA"/>
</dbReference>
<dbReference type="RefSeq" id="WP_011096924.1">
    <property type="nucleotide sequence ID" value="NC_004552.2"/>
</dbReference>
<dbReference type="SMR" id="Q8GH80"/>
<dbReference type="GeneID" id="93024797"/>
<dbReference type="KEGG" id="cab:CAB238"/>
<dbReference type="eggNOG" id="COG0576">
    <property type="taxonomic scope" value="Bacteria"/>
</dbReference>
<dbReference type="HOGENOM" id="CLU_057217_5_2_0"/>
<dbReference type="OrthoDB" id="9812586at2"/>
<dbReference type="Proteomes" id="UP000001012">
    <property type="component" value="Chromosome"/>
</dbReference>
<dbReference type="GO" id="GO:0005737">
    <property type="term" value="C:cytoplasm"/>
    <property type="evidence" value="ECO:0007669"/>
    <property type="project" value="UniProtKB-SubCell"/>
</dbReference>
<dbReference type="GO" id="GO:0000774">
    <property type="term" value="F:adenyl-nucleotide exchange factor activity"/>
    <property type="evidence" value="ECO:0007669"/>
    <property type="project" value="InterPro"/>
</dbReference>
<dbReference type="GO" id="GO:0042803">
    <property type="term" value="F:protein homodimerization activity"/>
    <property type="evidence" value="ECO:0007669"/>
    <property type="project" value="InterPro"/>
</dbReference>
<dbReference type="GO" id="GO:0051087">
    <property type="term" value="F:protein-folding chaperone binding"/>
    <property type="evidence" value="ECO:0007669"/>
    <property type="project" value="InterPro"/>
</dbReference>
<dbReference type="GO" id="GO:0051082">
    <property type="term" value="F:unfolded protein binding"/>
    <property type="evidence" value="ECO:0007669"/>
    <property type="project" value="TreeGrafter"/>
</dbReference>
<dbReference type="GO" id="GO:0006457">
    <property type="term" value="P:protein folding"/>
    <property type="evidence" value="ECO:0007669"/>
    <property type="project" value="InterPro"/>
</dbReference>
<dbReference type="CDD" id="cd00446">
    <property type="entry name" value="GrpE"/>
    <property type="match status" value="1"/>
</dbReference>
<dbReference type="FunFam" id="2.30.22.10:FF:000001">
    <property type="entry name" value="Protein GrpE"/>
    <property type="match status" value="1"/>
</dbReference>
<dbReference type="Gene3D" id="3.90.20.20">
    <property type="match status" value="1"/>
</dbReference>
<dbReference type="Gene3D" id="2.30.22.10">
    <property type="entry name" value="Head domain of nucleotide exchange factor GrpE"/>
    <property type="match status" value="1"/>
</dbReference>
<dbReference type="HAMAP" id="MF_01151">
    <property type="entry name" value="GrpE"/>
    <property type="match status" value="1"/>
</dbReference>
<dbReference type="InterPro" id="IPR000740">
    <property type="entry name" value="GrpE"/>
</dbReference>
<dbReference type="InterPro" id="IPR013805">
    <property type="entry name" value="GrpE_coiled_coil"/>
</dbReference>
<dbReference type="InterPro" id="IPR009012">
    <property type="entry name" value="GrpE_head"/>
</dbReference>
<dbReference type="PANTHER" id="PTHR21237">
    <property type="entry name" value="GRPE PROTEIN"/>
    <property type="match status" value="1"/>
</dbReference>
<dbReference type="PANTHER" id="PTHR21237:SF23">
    <property type="entry name" value="GRPE PROTEIN HOMOLOG, MITOCHONDRIAL"/>
    <property type="match status" value="1"/>
</dbReference>
<dbReference type="Pfam" id="PF01025">
    <property type="entry name" value="GrpE"/>
    <property type="match status" value="1"/>
</dbReference>
<dbReference type="PRINTS" id="PR00773">
    <property type="entry name" value="GRPEPROTEIN"/>
</dbReference>
<dbReference type="SUPFAM" id="SSF58014">
    <property type="entry name" value="Coiled-coil domain of nucleotide exchange factor GrpE"/>
    <property type="match status" value="1"/>
</dbReference>
<dbReference type="SUPFAM" id="SSF51064">
    <property type="entry name" value="Head domain of nucleotide exchange factor GrpE"/>
    <property type="match status" value="1"/>
</dbReference>
<dbReference type="PROSITE" id="PS01071">
    <property type="entry name" value="GRPE"/>
    <property type="match status" value="1"/>
</dbReference>
<protein>
    <recommendedName>
        <fullName evidence="1">Protein GrpE</fullName>
    </recommendedName>
    <alternativeName>
        <fullName evidence="1">HSP-70 cofactor</fullName>
    </alternativeName>
</protein>
<comment type="function">
    <text evidence="1">Participates actively in the response to hyperosmotic and heat shock by preventing the aggregation of stress-denatured proteins, in association with DnaK and GrpE. It is the nucleotide exchange factor for DnaK and may function as a thermosensor. Unfolded proteins bind initially to DnaJ; upon interaction with the DnaJ-bound protein, DnaK hydrolyzes its bound ATP, resulting in the formation of a stable complex. GrpE releases ADP from DnaK; ATP binding to DnaK triggers the release of the substrate protein, thus completing the reaction cycle. Several rounds of ATP-dependent interactions between DnaJ, DnaK and GrpE are required for fully efficient folding.</text>
</comment>
<comment type="subunit">
    <text evidence="1">Homodimer.</text>
</comment>
<comment type="subcellular location">
    <subcellularLocation>
        <location evidence="1">Cytoplasm</location>
    </subcellularLocation>
</comment>
<comment type="similarity">
    <text evidence="1">Belongs to the GrpE family.</text>
</comment>